<reference key="1">
    <citation type="journal article" date="2003" name="Science">
        <title>Control of crystal size and lattice formation by starmaker in otolith biomineralization.</title>
        <authorList>
            <person name="Soellner C."/>
            <person name="Burghammer M."/>
            <person name="Busch-Nentwich E."/>
            <person name="Berger J."/>
            <person name="Schwarz H."/>
            <person name="Riekel C."/>
            <person name="Nicolson T."/>
        </authorList>
    </citation>
    <scope>NUCLEOTIDE SEQUENCE [MRNA]</scope>
    <scope>FUNCTION</scope>
    <scope>DEVELOPMENTAL STAGE</scope>
    <scope>SUBCELLULAR LOCATION</scope>
    <scope>TISSUE SPECIFICITY</scope>
</reference>
<reference key="2">
    <citation type="journal article" date="2013" name="Nature">
        <title>The zebrafish reference genome sequence and its relationship to the human genome.</title>
        <authorList>
            <person name="Howe K."/>
            <person name="Clark M.D."/>
            <person name="Torroja C.F."/>
            <person name="Torrance J."/>
            <person name="Berthelot C."/>
            <person name="Muffato M."/>
            <person name="Collins J.E."/>
            <person name="Humphray S."/>
            <person name="McLaren K."/>
            <person name="Matthews L."/>
            <person name="McLaren S."/>
            <person name="Sealy I."/>
            <person name="Caccamo M."/>
            <person name="Churcher C."/>
            <person name="Scott C."/>
            <person name="Barrett J.C."/>
            <person name="Koch R."/>
            <person name="Rauch G.J."/>
            <person name="White S."/>
            <person name="Chow W."/>
            <person name="Kilian B."/>
            <person name="Quintais L.T."/>
            <person name="Guerra-Assuncao J.A."/>
            <person name="Zhou Y."/>
            <person name="Gu Y."/>
            <person name="Yen J."/>
            <person name="Vogel J.H."/>
            <person name="Eyre T."/>
            <person name="Redmond S."/>
            <person name="Banerjee R."/>
            <person name="Chi J."/>
            <person name="Fu B."/>
            <person name="Langley E."/>
            <person name="Maguire S.F."/>
            <person name="Laird G.K."/>
            <person name="Lloyd D."/>
            <person name="Kenyon E."/>
            <person name="Donaldson S."/>
            <person name="Sehra H."/>
            <person name="Almeida-King J."/>
            <person name="Loveland J."/>
            <person name="Trevanion S."/>
            <person name="Jones M."/>
            <person name="Quail M."/>
            <person name="Willey D."/>
            <person name="Hunt A."/>
            <person name="Burton J."/>
            <person name="Sims S."/>
            <person name="McLay K."/>
            <person name="Plumb B."/>
            <person name="Davis J."/>
            <person name="Clee C."/>
            <person name="Oliver K."/>
            <person name="Clark R."/>
            <person name="Riddle C."/>
            <person name="Elliot D."/>
            <person name="Threadgold G."/>
            <person name="Harden G."/>
            <person name="Ware D."/>
            <person name="Begum S."/>
            <person name="Mortimore B."/>
            <person name="Kerry G."/>
            <person name="Heath P."/>
            <person name="Phillimore B."/>
            <person name="Tracey A."/>
            <person name="Corby N."/>
            <person name="Dunn M."/>
            <person name="Johnson C."/>
            <person name="Wood J."/>
            <person name="Clark S."/>
            <person name="Pelan S."/>
            <person name="Griffiths G."/>
            <person name="Smith M."/>
            <person name="Glithero R."/>
            <person name="Howden P."/>
            <person name="Barker N."/>
            <person name="Lloyd C."/>
            <person name="Stevens C."/>
            <person name="Harley J."/>
            <person name="Holt K."/>
            <person name="Panagiotidis G."/>
            <person name="Lovell J."/>
            <person name="Beasley H."/>
            <person name="Henderson C."/>
            <person name="Gordon D."/>
            <person name="Auger K."/>
            <person name="Wright D."/>
            <person name="Collins J."/>
            <person name="Raisen C."/>
            <person name="Dyer L."/>
            <person name="Leung K."/>
            <person name="Robertson L."/>
            <person name="Ambridge K."/>
            <person name="Leongamornlert D."/>
            <person name="McGuire S."/>
            <person name="Gilderthorp R."/>
            <person name="Griffiths C."/>
            <person name="Manthravadi D."/>
            <person name="Nichol S."/>
            <person name="Barker G."/>
            <person name="Whitehead S."/>
            <person name="Kay M."/>
            <person name="Brown J."/>
            <person name="Murnane C."/>
            <person name="Gray E."/>
            <person name="Humphries M."/>
            <person name="Sycamore N."/>
            <person name="Barker D."/>
            <person name="Saunders D."/>
            <person name="Wallis J."/>
            <person name="Babbage A."/>
            <person name="Hammond S."/>
            <person name="Mashreghi-Mohammadi M."/>
            <person name="Barr L."/>
            <person name="Martin S."/>
            <person name="Wray P."/>
            <person name="Ellington A."/>
            <person name="Matthews N."/>
            <person name="Ellwood M."/>
            <person name="Woodmansey R."/>
            <person name="Clark G."/>
            <person name="Cooper J."/>
            <person name="Tromans A."/>
            <person name="Grafham D."/>
            <person name="Skuce C."/>
            <person name="Pandian R."/>
            <person name="Andrews R."/>
            <person name="Harrison E."/>
            <person name="Kimberley A."/>
            <person name="Garnett J."/>
            <person name="Fosker N."/>
            <person name="Hall R."/>
            <person name="Garner P."/>
            <person name="Kelly D."/>
            <person name="Bird C."/>
            <person name="Palmer S."/>
            <person name="Gehring I."/>
            <person name="Berger A."/>
            <person name="Dooley C.M."/>
            <person name="Ersan-Urun Z."/>
            <person name="Eser C."/>
            <person name="Geiger H."/>
            <person name="Geisler M."/>
            <person name="Karotki L."/>
            <person name="Kirn A."/>
            <person name="Konantz J."/>
            <person name="Konantz M."/>
            <person name="Oberlander M."/>
            <person name="Rudolph-Geiger S."/>
            <person name="Teucke M."/>
            <person name="Lanz C."/>
            <person name="Raddatz G."/>
            <person name="Osoegawa K."/>
            <person name="Zhu B."/>
            <person name="Rapp A."/>
            <person name="Widaa S."/>
            <person name="Langford C."/>
            <person name="Yang F."/>
            <person name="Schuster S.C."/>
            <person name="Carter N.P."/>
            <person name="Harrow J."/>
            <person name="Ning Z."/>
            <person name="Herrero J."/>
            <person name="Searle S.M."/>
            <person name="Enright A."/>
            <person name="Geisler R."/>
            <person name="Plasterk R.H."/>
            <person name="Lee C."/>
            <person name="Westerfield M."/>
            <person name="de Jong P.J."/>
            <person name="Zon L.I."/>
            <person name="Postlethwait J.H."/>
            <person name="Nusslein-Volhard C."/>
            <person name="Hubbard T.J."/>
            <person name="Roest Crollius H."/>
            <person name="Rogers J."/>
            <person name="Stemple D.L."/>
        </authorList>
    </citation>
    <scope>NUCLEOTIDE SEQUENCE [LARGE SCALE GENOMIC DNA]</scope>
    <source>
        <strain>Tuebingen</strain>
    </source>
</reference>
<reference key="3">
    <citation type="submission" date="2006-12" db="EMBL/GenBank/DDBJ databases">
        <authorList>
            <consortium name="NIH - Zebrafish Gene Collection (ZGC) project"/>
        </authorList>
    </citation>
    <scope>NUCLEOTIDE SEQUENCE [LARGE SCALE MRNA]</scope>
    <source>
        <tissue>Kidney</tissue>
    </source>
</reference>
<evidence type="ECO:0000255" key="1"/>
<evidence type="ECO:0000256" key="2">
    <source>
        <dbReference type="SAM" id="MobiDB-lite"/>
    </source>
</evidence>
<evidence type="ECO:0000269" key="3">
    <source>
    </source>
</evidence>
<evidence type="ECO:0000305" key="4"/>
<feature type="signal peptide" evidence="1">
    <location>
        <begin position="1"/>
        <end position="20"/>
    </location>
</feature>
<feature type="chain" id="PRO_0000315278" description="Protein starmaker">
    <location>
        <begin position="21"/>
        <end position="613"/>
    </location>
</feature>
<feature type="region of interest" description="Disordered" evidence="2">
    <location>
        <begin position="42"/>
        <end position="613"/>
    </location>
</feature>
<feature type="compositionally biased region" description="Basic and acidic residues" evidence="2">
    <location>
        <begin position="62"/>
        <end position="72"/>
    </location>
</feature>
<feature type="compositionally biased region" description="Basic and acidic residues" evidence="2">
    <location>
        <begin position="117"/>
        <end position="132"/>
    </location>
</feature>
<feature type="compositionally biased region" description="Basic and acidic residues" evidence="2">
    <location>
        <begin position="147"/>
        <end position="193"/>
    </location>
</feature>
<feature type="compositionally biased region" description="Basic and acidic residues" evidence="2">
    <location>
        <begin position="206"/>
        <end position="284"/>
    </location>
</feature>
<feature type="compositionally biased region" description="Basic and acidic residues" evidence="2">
    <location>
        <begin position="291"/>
        <end position="449"/>
    </location>
</feature>
<feature type="compositionally biased region" description="Acidic residues" evidence="2">
    <location>
        <begin position="450"/>
        <end position="465"/>
    </location>
</feature>
<feature type="compositionally biased region" description="Basic and acidic residues" evidence="2">
    <location>
        <begin position="467"/>
        <end position="482"/>
    </location>
</feature>
<feature type="compositionally biased region" description="Basic and acidic residues" evidence="2">
    <location>
        <begin position="509"/>
        <end position="521"/>
    </location>
</feature>
<feature type="compositionally biased region" description="Basic and acidic residues" evidence="2">
    <location>
        <begin position="538"/>
        <end position="554"/>
    </location>
</feature>
<feature type="compositionally biased region" description="Acidic residues" evidence="2">
    <location>
        <begin position="555"/>
        <end position="573"/>
    </location>
</feature>
<feature type="compositionally biased region" description="Basic and acidic residues" evidence="2">
    <location>
        <begin position="574"/>
        <end position="607"/>
    </location>
</feature>
<feature type="sequence conflict" description="In Ref. 1; AAQ93680." evidence="4" ref="1">
    <original>Q</original>
    <variation>K</variation>
    <location>
        <position position="144"/>
    </location>
</feature>
<feature type="sequence conflict" description="In Ref. 1; AAQ93680." evidence="4" ref="1">
    <original>D</original>
    <variation>E</variation>
    <location>
        <position position="473"/>
    </location>
</feature>
<feature type="sequence conflict" description="In Ref. 1; AAQ93680." evidence="4" ref="1">
    <original>R</original>
    <variation>S</variation>
    <location>
        <position position="606"/>
    </location>
</feature>
<organism>
    <name type="scientific">Danio rerio</name>
    <name type="common">Zebrafish</name>
    <name type="synonym">Brachydanio rerio</name>
    <dbReference type="NCBI Taxonomy" id="7955"/>
    <lineage>
        <taxon>Eukaryota</taxon>
        <taxon>Metazoa</taxon>
        <taxon>Chordata</taxon>
        <taxon>Craniata</taxon>
        <taxon>Vertebrata</taxon>
        <taxon>Euteleostomi</taxon>
        <taxon>Actinopterygii</taxon>
        <taxon>Neopterygii</taxon>
        <taxon>Teleostei</taxon>
        <taxon>Ostariophysi</taxon>
        <taxon>Cypriniformes</taxon>
        <taxon>Danionidae</taxon>
        <taxon>Danioninae</taxon>
        <taxon>Danio</taxon>
    </lineage>
</organism>
<protein>
    <recommendedName>
        <fullName>Protein starmaker</fullName>
    </recommendedName>
</protein>
<comment type="function">
    <text evidence="3">Essential for the formation of otoliths in the inner ear of developing larvae and for the perception of gravity and acceleration. May be one of the organic components of the ortholiths.</text>
</comment>
<comment type="subcellular location">
    <subcellularLocation>
        <location evidence="3">Secreted</location>
    </subcellularLocation>
    <text>Detected on otoliths and the apical surface of epithelial cells in the otic placode in larvae 24 hours after fertilization.</text>
</comment>
<comment type="developmental stage">
    <text evidence="3">Detected in the otic placode and the pineal gland in embryos 24 hours after fertilization. Detected in the sensory hair epithelium along the entire length of the lateral line organ in larvae 72 hours post fertilization. Restricted mainly to neuroepithelial patches in the ear of larvae 72 hours post fertilization.</text>
</comment>
<comment type="miscellaneous">
    <text>Otoliths are structures composed of proteins and calcium carbonate that are found in the fish inner ear in contact with the otic epithelium. They are essential for the perception of gravity and acceleration.</text>
</comment>
<accession>A2VD23</accession>
<accession>Q6UDM5</accession>
<proteinExistence type="evidence at transcript level"/>
<sequence length="613" mass="66175">MLSRTVFVPLILAFVGVSISAPVSNNNGTDNDESAADQRHIFTVQFNVGTPAPADGDSVTTDGKDSAEKNEAPGDSSDTTEKPGTTDGKDSAEQHGVTTDGKDEAEQHGVTTDGQDSAEKRGEADGAPDKPDTQNGTDDTDSDQETDASHHKTGDSDENKDKPSAEDHTDGNHAGKDSTDSKESPDTTDKPEGPDSDSAPDGDSASAEKTDSDHSPDEDANKSSTEADKDDTSDKDSSQTDEKHDSDASDKDEKHEDKDEKSDEKDSSKDSEDKSQEKSDKSDDGSNSEADEQKESVESKDHDSDSQDSDSAEKKEKHDDKDQDSSDSADSKDSDEDKDKDHSEQKDSEDHEHKEKHTKDKEEHKDSDEGKDDEDKSKSDEHDKDESESKEASKSDESEQEEKKDDKSDSDNSSRDSHSDSDSDSHSDSDSDSHSDSHSDSDSDSHSDSDSDSDSDSDSDSDSDSDSNSRDKDEKKDKSSESRDEDSSDSDSKSNSESSETAEEDTNDDKDSSVEKDKTDSSDSASVEANDSDDEHDDDSKDATPSSEDHTAEKTDEDSHDVSDDDDDIDAHDDEAGVEHGTDEASKPHQEPDHHDDTTHGSDDGRKTSMPIS</sequence>
<dbReference type="EMBL" id="AY372242">
    <property type="protein sequence ID" value="AAQ93680.1"/>
    <property type="molecule type" value="mRNA"/>
</dbReference>
<dbReference type="EMBL" id="CT574549">
    <property type="protein sequence ID" value="CAN87876.1"/>
    <property type="molecule type" value="Genomic_DNA"/>
</dbReference>
<dbReference type="EMBL" id="BC129155">
    <property type="protein sequence ID" value="AAI29156.1"/>
    <property type="molecule type" value="mRNA"/>
</dbReference>
<dbReference type="RefSeq" id="NP_942112.2">
    <property type="nucleotide sequence ID" value="NM_198817.2"/>
</dbReference>
<dbReference type="STRING" id="7955.ENSDARP00000095945"/>
<dbReference type="PaxDb" id="7955-ENSDARP00000095945"/>
<dbReference type="Ensembl" id="ENSDART00000105174">
    <property type="protein sequence ID" value="ENSDARP00000095945"/>
    <property type="gene ID" value="ENSDARG00000035694"/>
</dbReference>
<dbReference type="GeneID" id="386700"/>
<dbReference type="KEGG" id="dre:386700"/>
<dbReference type="AGR" id="ZFIN:ZDB-GENE-031112-4"/>
<dbReference type="CTD" id="20882"/>
<dbReference type="ZFIN" id="ZDB-GENE-031112-4">
    <property type="gene designation" value="stm"/>
</dbReference>
<dbReference type="eggNOG" id="KOG1808">
    <property type="taxonomic scope" value="Eukaryota"/>
</dbReference>
<dbReference type="HOGENOM" id="CLU_445454_0_0_1"/>
<dbReference type="InParanoid" id="A2VD23"/>
<dbReference type="OMA" id="IQYYGEG"/>
<dbReference type="OrthoDB" id="8965193at2759"/>
<dbReference type="TreeFam" id="TF343945"/>
<dbReference type="PRO" id="PR:A2VD23"/>
<dbReference type="Proteomes" id="UP000000437">
    <property type="component" value="Chromosome 19"/>
</dbReference>
<dbReference type="Bgee" id="ENSDARG00000035694">
    <property type="expression patterns" value="Expressed in swim bladder and 49 other cell types or tissues"/>
</dbReference>
<dbReference type="ExpressionAtlas" id="A2VD23">
    <property type="expression patterns" value="baseline and differential"/>
</dbReference>
<dbReference type="GO" id="GO:0005576">
    <property type="term" value="C:extracellular region"/>
    <property type="evidence" value="ECO:0007669"/>
    <property type="project" value="UniProtKB-SubCell"/>
</dbReference>
<dbReference type="GO" id="GO:0005509">
    <property type="term" value="F:calcium ion binding"/>
    <property type="evidence" value="ECO:0000314"/>
    <property type="project" value="DisProt"/>
</dbReference>
<dbReference type="GO" id="GO:0009590">
    <property type="term" value="P:detection of gravity"/>
    <property type="evidence" value="ECO:0000315"/>
    <property type="project" value="ZFIN"/>
</dbReference>
<dbReference type="GO" id="GO:0035803">
    <property type="term" value="P:egg coat formation"/>
    <property type="evidence" value="ECO:0000315"/>
    <property type="project" value="ZFIN"/>
</dbReference>
<dbReference type="GO" id="GO:0043049">
    <property type="term" value="P:otic placode formation"/>
    <property type="evidence" value="ECO:0000270"/>
    <property type="project" value="ZFIN"/>
</dbReference>
<dbReference type="GO" id="GO:0045299">
    <property type="term" value="P:otolith mineralization"/>
    <property type="evidence" value="ECO:0000314"/>
    <property type="project" value="ZFIN"/>
</dbReference>
<dbReference type="GO" id="GO:0032474">
    <property type="term" value="P:otolith morphogenesis"/>
    <property type="evidence" value="ECO:0000315"/>
    <property type="project" value="ZFIN"/>
</dbReference>
<dbReference type="DisProt" id="DP00584"/>
<gene>
    <name type="primary">stm</name>
    <name type="ORF">si:ch211-80h18.3</name>
</gene>
<keyword id="KW-1185">Reference proteome</keyword>
<keyword id="KW-0964">Secreted</keyword>
<keyword id="KW-0732">Signal</keyword>
<name>STM_DANRE</name>